<organism>
    <name type="scientific">Acidothermus cellulolyticus (strain ATCC 43068 / DSM 8971 / 11B)</name>
    <dbReference type="NCBI Taxonomy" id="351607"/>
    <lineage>
        <taxon>Bacteria</taxon>
        <taxon>Bacillati</taxon>
        <taxon>Actinomycetota</taxon>
        <taxon>Actinomycetes</taxon>
        <taxon>Acidothermales</taxon>
        <taxon>Acidothermaceae</taxon>
        <taxon>Acidothermus</taxon>
    </lineage>
</organism>
<feature type="chain" id="PRO_1000047539" description="Glutamate racemase">
    <location>
        <begin position="1"/>
        <end position="263"/>
    </location>
</feature>
<feature type="active site" description="Proton donor/acceptor" evidence="1">
    <location>
        <position position="73"/>
    </location>
</feature>
<feature type="active site" description="Proton donor/acceptor" evidence="1">
    <location>
        <position position="183"/>
    </location>
</feature>
<feature type="binding site" evidence="1">
    <location>
        <begin position="10"/>
        <end position="11"/>
    </location>
    <ligand>
        <name>substrate</name>
    </ligand>
</feature>
<feature type="binding site" evidence="1">
    <location>
        <begin position="42"/>
        <end position="43"/>
    </location>
    <ligand>
        <name>substrate</name>
    </ligand>
</feature>
<feature type="binding site" evidence="1">
    <location>
        <begin position="74"/>
        <end position="75"/>
    </location>
    <ligand>
        <name>substrate</name>
    </ligand>
</feature>
<feature type="binding site" evidence="1">
    <location>
        <begin position="184"/>
        <end position="185"/>
    </location>
    <ligand>
        <name>substrate</name>
    </ligand>
</feature>
<keyword id="KW-0133">Cell shape</keyword>
<keyword id="KW-0961">Cell wall biogenesis/degradation</keyword>
<keyword id="KW-0413">Isomerase</keyword>
<keyword id="KW-0573">Peptidoglycan synthesis</keyword>
<keyword id="KW-1185">Reference proteome</keyword>
<protein>
    <recommendedName>
        <fullName evidence="1">Glutamate racemase</fullName>
        <ecNumber evidence="1">5.1.1.3</ecNumber>
    </recommendedName>
</protein>
<accession>A0LVJ8</accession>
<evidence type="ECO:0000255" key="1">
    <source>
        <dbReference type="HAMAP-Rule" id="MF_00258"/>
    </source>
</evidence>
<proteinExistence type="inferred from homology"/>
<comment type="function">
    <text evidence="1">Provides the (R)-glutamate required for cell wall biosynthesis.</text>
</comment>
<comment type="catalytic activity">
    <reaction evidence="1">
        <text>L-glutamate = D-glutamate</text>
        <dbReference type="Rhea" id="RHEA:12813"/>
        <dbReference type="ChEBI" id="CHEBI:29985"/>
        <dbReference type="ChEBI" id="CHEBI:29986"/>
        <dbReference type="EC" id="5.1.1.3"/>
    </reaction>
</comment>
<comment type="pathway">
    <text evidence="1">Cell wall biogenesis; peptidoglycan biosynthesis.</text>
</comment>
<comment type="similarity">
    <text evidence="1">Belongs to the aspartate/glutamate racemases family.</text>
</comment>
<dbReference type="EC" id="5.1.1.3" evidence="1"/>
<dbReference type="EMBL" id="CP000481">
    <property type="protein sequence ID" value="ABK53458.1"/>
    <property type="molecule type" value="Genomic_DNA"/>
</dbReference>
<dbReference type="SMR" id="A0LVJ8"/>
<dbReference type="FunCoup" id="A0LVJ8">
    <property type="interactions" value="31"/>
</dbReference>
<dbReference type="STRING" id="351607.Acel_1686"/>
<dbReference type="KEGG" id="ace:Acel_1686"/>
<dbReference type="eggNOG" id="COG0796">
    <property type="taxonomic scope" value="Bacteria"/>
</dbReference>
<dbReference type="HOGENOM" id="CLU_052344_0_1_11"/>
<dbReference type="InParanoid" id="A0LVJ8"/>
<dbReference type="OrthoDB" id="9801055at2"/>
<dbReference type="UniPathway" id="UPA00219"/>
<dbReference type="Proteomes" id="UP000008221">
    <property type="component" value="Chromosome"/>
</dbReference>
<dbReference type="GO" id="GO:0008881">
    <property type="term" value="F:glutamate racemase activity"/>
    <property type="evidence" value="ECO:0007669"/>
    <property type="project" value="UniProtKB-UniRule"/>
</dbReference>
<dbReference type="GO" id="GO:0071555">
    <property type="term" value="P:cell wall organization"/>
    <property type="evidence" value="ECO:0007669"/>
    <property type="project" value="UniProtKB-KW"/>
</dbReference>
<dbReference type="GO" id="GO:0009252">
    <property type="term" value="P:peptidoglycan biosynthetic process"/>
    <property type="evidence" value="ECO:0007669"/>
    <property type="project" value="UniProtKB-UniRule"/>
</dbReference>
<dbReference type="GO" id="GO:0008360">
    <property type="term" value="P:regulation of cell shape"/>
    <property type="evidence" value="ECO:0007669"/>
    <property type="project" value="UniProtKB-KW"/>
</dbReference>
<dbReference type="FunFam" id="3.40.50.1860:FF:000001">
    <property type="entry name" value="Glutamate racemase"/>
    <property type="match status" value="1"/>
</dbReference>
<dbReference type="Gene3D" id="3.40.50.1860">
    <property type="match status" value="2"/>
</dbReference>
<dbReference type="HAMAP" id="MF_00258">
    <property type="entry name" value="Glu_racemase"/>
    <property type="match status" value="1"/>
</dbReference>
<dbReference type="InterPro" id="IPR015942">
    <property type="entry name" value="Asp/Glu/hydantoin_racemase"/>
</dbReference>
<dbReference type="InterPro" id="IPR001920">
    <property type="entry name" value="Asp/Glu_race"/>
</dbReference>
<dbReference type="InterPro" id="IPR018187">
    <property type="entry name" value="Asp/Glu_racemase_AS_1"/>
</dbReference>
<dbReference type="InterPro" id="IPR033134">
    <property type="entry name" value="Asp/Glu_racemase_AS_2"/>
</dbReference>
<dbReference type="InterPro" id="IPR004391">
    <property type="entry name" value="Glu_race"/>
</dbReference>
<dbReference type="NCBIfam" id="TIGR00067">
    <property type="entry name" value="glut_race"/>
    <property type="match status" value="1"/>
</dbReference>
<dbReference type="PANTHER" id="PTHR21198">
    <property type="entry name" value="GLUTAMATE RACEMASE"/>
    <property type="match status" value="1"/>
</dbReference>
<dbReference type="PANTHER" id="PTHR21198:SF2">
    <property type="entry name" value="GLUTAMATE RACEMASE"/>
    <property type="match status" value="1"/>
</dbReference>
<dbReference type="Pfam" id="PF01177">
    <property type="entry name" value="Asp_Glu_race"/>
    <property type="match status" value="1"/>
</dbReference>
<dbReference type="SUPFAM" id="SSF53681">
    <property type="entry name" value="Aspartate/glutamate racemase"/>
    <property type="match status" value="2"/>
</dbReference>
<dbReference type="PROSITE" id="PS00923">
    <property type="entry name" value="ASP_GLU_RACEMASE_1"/>
    <property type="match status" value="1"/>
</dbReference>
<dbReference type="PROSITE" id="PS00924">
    <property type="entry name" value="ASP_GLU_RACEMASE_2"/>
    <property type="match status" value="1"/>
</dbReference>
<sequence length="263" mass="28062">MRNLPIGVFDSGVGGLTVARAILDLLPHEPLYYVADTAHFPYGTKSIAEVRQYGLAVLDRMVADGVKLLVIACNSASSALLRDARERYDVPVVEVIQPAVRKAVSATRNGKVGVIGTPATIASMAYDDAFAAAPHVDLTTAACPRFVEFVEAGITMSDELLECAKEYLAPIVERGCDTLILGCTHYPFLAGAIALVVGDEVMLVSSADETARDVYRVLVSRGLTRPASAPPPVHRFAATGDPEPFSRLGRRFLGPEIGHVTTL</sequence>
<gene>
    <name evidence="1" type="primary">murI</name>
    <name type="ordered locus">Acel_1686</name>
</gene>
<name>MURI_ACIC1</name>
<reference key="1">
    <citation type="journal article" date="2009" name="Genome Res.">
        <title>Complete genome of the cellulolytic thermophile Acidothermus cellulolyticus 11B provides insights into its ecophysiological and evolutionary adaptations.</title>
        <authorList>
            <person name="Barabote R.D."/>
            <person name="Xie G."/>
            <person name="Leu D.H."/>
            <person name="Normand P."/>
            <person name="Necsulea A."/>
            <person name="Daubin V."/>
            <person name="Medigue C."/>
            <person name="Adney W.S."/>
            <person name="Xu X.C."/>
            <person name="Lapidus A."/>
            <person name="Parales R.E."/>
            <person name="Detter C."/>
            <person name="Pujic P."/>
            <person name="Bruce D."/>
            <person name="Lavire C."/>
            <person name="Challacombe J.F."/>
            <person name="Brettin T.S."/>
            <person name="Berry A.M."/>
        </authorList>
    </citation>
    <scope>NUCLEOTIDE SEQUENCE [LARGE SCALE GENOMIC DNA]</scope>
    <source>
        <strain>ATCC 43068 / DSM 8971 / 11B</strain>
    </source>
</reference>